<protein>
    <recommendedName>
        <fullName evidence="1">tRNA uridine(34) hydroxylase</fullName>
        <ecNumber evidence="1">1.14.-.-</ecNumber>
    </recommendedName>
    <alternativeName>
        <fullName evidence="1">tRNA hydroxylation protein O</fullName>
    </alternativeName>
</protein>
<dbReference type="EC" id="1.14.-.-" evidence="1"/>
<dbReference type="EMBL" id="CP000262">
    <property type="protein sequence ID" value="ABF37761.1"/>
    <property type="molecule type" value="Genomic_DNA"/>
</dbReference>
<dbReference type="SMR" id="Q1J713"/>
<dbReference type="KEGG" id="spi:MGAS10750_Spy0811"/>
<dbReference type="HOGENOM" id="CLU_038878_1_0_9"/>
<dbReference type="Proteomes" id="UP000002434">
    <property type="component" value="Chromosome"/>
</dbReference>
<dbReference type="GO" id="GO:0016705">
    <property type="term" value="F:oxidoreductase activity, acting on paired donors, with incorporation or reduction of molecular oxygen"/>
    <property type="evidence" value="ECO:0007669"/>
    <property type="project" value="UniProtKB-UniRule"/>
</dbReference>
<dbReference type="GO" id="GO:0006400">
    <property type="term" value="P:tRNA modification"/>
    <property type="evidence" value="ECO:0007669"/>
    <property type="project" value="UniProtKB-UniRule"/>
</dbReference>
<dbReference type="CDD" id="cd01518">
    <property type="entry name" value="RHOD_YceA"/>
    <property type="match status" value="1"/>
</dbReference>
<dbReference type="Gene3D" id="3.30.70.100">
    <property type="match status" value="1"/>
</dbReference>
<dbReference type="Gene3D" id="3.40.250.10">
    <property type="entry name" value="Rhodanese-like domain"/>
    <property type="match status" value="1"/>
</dbReference>
<dbReference type="HAMAP" id="MF_00469">
    <property type="entry name" value="TrhO"/>
    <property type="match status" value="1"/>
</dbReference>
<dbReference type="InterPro" id="IPR001763">
    <property type="entry name" value="Rhodanese-like_dom"/>
</dbReference>
<dbReference type="InterPro" id="IPR036873">
    <property type="entry name" value="Rhodanese-like_dom_sf"/>
</dbReference>
<dbReference type="InterPro" id="IPR022111">
    <property type="entry name" value="Rhodanese_C"/>
</dbReference>
<dbReference type="InterPro" id="IPR020936">
    <property type="entry name" value="TrhO"/>
</dbReference>
<dbReference type="InterPro" id="IPR040503">
    <property type="entry name" value="TRHO_N"/>
</dbReference>
<dbReference type="NCBIfam" id="NF001135">
    <property type="entry name" value="PRK00142.1-3"/>
    <property type="match status" value="1"/>
</dbReference>
<dbReference type="NCBIfam" id="NF001137">
    <property type="entry name" value="PRK00142.1-5"/>
    <property type="match status" value="1"/>
</dbReference>
<dbReference type="PANTHER" id="PTHR43268:SF3">
    <property type="entry name" value="RHODANESE-LIKE DOMAIN-CONTAINING PROTEIN 7-RELATED"/>
    <property type="match status" value="1"/>
</dbReference>
<dbReference type="PANTHER" id="PTHR43268">
    <property type="entry name" value="THIOSULFATE SULFURTRANSFERASE/RHODANESE-LIKE DOMAIN-CONTAINING PROTEIN 2"/>
    <property type="match status" value="1"/>
</dbReference>
<dbReference type="Pfam" id="PF00581">
    <property type="entry name" value="Rhodanese"/>
    <property type="match status" value="1"/>
</dbReference>
<dbReference type="Pfam" id="PF12368">
    <property type="entry name" value="Rhodanese_C"/>
    <property type="match status" value="1"/>
</dbReference>
<dbReference type="Pfam" id="PF17773">
    <property type="entry name" value="UPF0176_N"/>
    <property type="match status" value="1"/>
</dbReference>
<dbReference type="SMART" id="SM00450">
    <property type="entry name" value="RHOD"/>
    <property type="match status" value="1"/>
</dbReference>
<dbReference type="SUPFAM" id="SSF52821">
    <property type="entry name" value="Rhodanese/Cell cycle control phosphatase"/>
    <property type="match status" value="1"/>
</dbReference>
<dbReference type="PROSITE" id="PS50206">
    <property type="entry name" value="RHODANESE_3"/>
    <property type="match status" value="1"/>
</dbReference>
<reference key="1">
    <citation type="journal article" date="2006" name="Proc. Natl. Acad. Sci. U.S.A.">
        <title>Molecular genetic anatomy of inter- and intraserotype variation in the human bacterial pathogen group A Streptococcus.</title>
        <authorList>
            <person name="Beres S.B."/>
            <person name="Richter E.W."/>
            <person name="Nagiec M.J."/>
            <person name="Sumby P."/>
            <person name="Porcella S.F."/>
            <person name="DeLeo F.R."/>
            <person name="Musser J.M."/>
        </authorList>
    </citation>
    <scope>NUCLEOTIDE SEQUENCE [LARGE SCALE GENOMIC DNA]</scope>
    <source>
        <strain>MGAS10750</strain>
    </source>
</reference>
<gene>
    <name evidence="1" type="primary">trhO</name>
    <name type="ordered locus">MGAS10750_Spy0811</name>
</gene>
<accession>Q1J713</accession>
<comment type="function">
    <text evidence="1">Catalyzes oxygen-dependent 5-hydroxyuridine (ho5U) modification at position 34 in tRNAs.</text>
</comment>
<comment type="catalytic activity">
    <reaction evidence="1">
        <text>uridine(34) in tRNA + AH2 + O2 = 5-hydroxyuridine(34) in tRNA + A + H2O</text>
        <dbReference type="Rhea" id="RHEA:64224"/>
        <dbReference type="Rhea" id="RHEA-COMP:11727"/>
        <dbReference type="Rhea" id="RHEA-COMP:13381"/>
        <dbReference type="ChEBI" id="CHEBI:13193"/>
        <dbReference type="ChEBI" id="CHEBI:15377"/>
        <dbReference type="ChEBI" id="CHEBI:15379"/>
        <dbReference type="ChEBI" id="CHEBI:17499"/>
        <dbReference type="ChEBI" id="CHEBI:65315"/>
        <dbReference type="ChEBI" id="CHEBI:136877"/>
    </reaction>
</comment>
<comment type="similarity">
    <text evidence="1">Belongs to the TrhO family.</text>
</comment>
<organism>
    <name type="scientific">Streptococcus pyogenes serotype M4 (strain MGAS10750)</name>
    <dbReference type="NCBI Taxonomy" id="370554"/>
    <lineage>
        <taxon>Bacteria</taxon>
        <taxon>Bacillati</taxon>
        <taxon>Bacillota</taxon>
        <taxon>Bacilli</taxon>
        <taxon>Lactobacillales</taxon>
        <taxon>Streptococcaceae</taxon>
        <taxon>Streptococcus</taxon>
    </lineage>
</organism>
<evidence type="ECO:0000255" key="1">
    <source>
        <dbReference type="HAMAP-Rule" id="MF_00469"/>
    </source>
</evidence>
<feature type="chain" id="PRO_1000013787" description="tRNA uridine(34) hydroxylase">
    <location>
        <begin position="1"/>
        <end position="328"/>
    </location>
</feature>
<feature type="domain" description="Rhodanese" evidence="1">
    <location>
        <begin position="130"/>
        <end position="224"/>
    </location>
</feature>
<feature type="active site" description="Cysteine persulfide intermediate" evidence="1">
    <location>
        <position position="184"/>
    </location>
</feature>
<proteinExistence type="inferred from homology"/>
<sequence length="328" mass="38213">MSEKIRVLLYYKYVSIENAQEYAAKHLEFCKSIGLKGRILIADEGINGTVSGDYETTQKYMDWVHSDERFADLWFKIDEENQQAFRKMFVRYKKEIVHLGLEDNNFDSDINPLETTGEYLNPKQFKEALLDEDTVVLDTRNDYEYDLGHFRGAIRPDIRNFRELPQWVRDNKDKFMEKRVVVYCTGGVRCEKFSGWMVREGFKDVGQLHGGIATYGKDPEVQGELWDGAMYVFDDRISVPINHVNPTVISKDYFDGTPCERYVNCANPFCNKQIFASEENETKYVRGCSPECRAHERNRYVQENGLSRQEWAERLEAIGESLPEFVGA</sequence>
<keyword id="KW-0560">Oxidoreductase</keyword>
<keyword id="KW-0819">tRNA processing</keyword>
<name>TRHO_STRPF</name>